<comment type="function">
    <text evidence="1">Modulates the synthesis of GlmS, by affecting the processing and stability of the regulatory small RNA GlmZ. When glucosamine-6-phosphate (GlcN6P) concentrations are high in the cell, RapZ binds GlmZ and targets it to cleavage by RNase E. Consequently, GlmZ is inactivated and unable to activate GlmS synthesis. Under low GlcN6P concentrations, RapZ is sequestered and inactivated by an other regulatory small RNA, GlmY, preventing GlmZ degradation and leading to synthesis of GlmS.</text>
</comment>
<comment type="subunit">
    <text evidence="1">Homotrimer.</text>
</comment>
<comment type="similarity">
    <text evidence="1">Belongs to the RapZ-like family. RapZ subfamily.</text>
</comment>
<name>RAPZ_ECO55</name>
<reference key="1">
    <citation type="journal article" date="2009" name="PLoS Genet.">
        <title>Organised genome dynamics in the Escherichia coli species results in highly diverse adaptive paths.</title>
        <authorList>
            <person name="Touchon M."/>
            <person name="Hoede C."/>
            <person name="Tenaillon O."/>
            <person name="Barbe V."/>
            <person name="Baeriswyl S."/>
            <person name="Bidet P."/>
            <person name="Bingen E."/>
            <person name="Bonacorsi S."/>
            <person name="Bouchier C."/>
            <person name="Bouvet O."/>
            <person name="Calteau A."/>
            <person name="Chiapello H."/>
            <person name="Clermont O."/>
            <person name="Cruveiller S."/>
            <person name="Danchin A."/>
            <person name="Diard M."/>
            <person name="Dossat C."/>
            <person name="Karoui M.E."/>
            <person name="Frapy E."/>
            <person name="Garry L."/>
            <person name="Ghigo J.M."/>
            <person name="Gilles A.M."/>
            <person name="Johnson J."/>
            <person name="Le Bouguenec C."/>
            <person name="Lescat M."/>
            <person name="Mangenot S."/>
            <person name="Martinez-Jehanne V."/>
            <person name="Matic I."/>
            <person name="Nassif X."/>
            <person name="Oztas S."/>
            <person name="Petit M.A."/>
            <person name="Pichon C."/>
            <person name="Rouy Z."/>
            <person name="Ruf C.S."/>
            <person name="Schneider D."/>
            <person name="Tourret J."/>
            <person name="Vacherie B."/>
            <person name="Vallenet D."/>
            <person name="Medigue C."/>
            <person name="Rocha E.P.C."/>
            <person name="Denamur E."/>
        </authorList>
    </citation>
    <scope>NUCLEOTIDE SEQUENCE [LARGE SCALE GENOMIC DNA]</scope>
    <source>
        <strain>55989 / EAEC</strain>
    </source>
</reference>
<evidence type="ECO:0000255" key="1">
    <source>
        <dbReference type="HAMAP-Rule" id="MF_00636"/>
    </source>
</evidence>
<organism>
    <name type="scientific">Escherichia coli (strain 55989 / EAEC)</name>
    <dbReference type="NCBI Taxonomy" id="585055"/>
    <lineage>
        <taxon>Bacteria</taxon>
        <taxon>Pseudomonadati</taxon>
        <taxon>Pseudomonadota</taxon>
        <taxon>Gammaproteobacteria</taxon>
        <taxon>Enterobacterales</taxon>
        <taxon>Enterobacteriaceae</taxon>
        <taxon>Escherichia</taxon>
    </lineage>
</organism>
<sequence>MVLMIVSGRSGSGKSVALRALEDMGFYCVDNLPVVLLPDLARTLADREISAAVSIDVRNMPESPEIFEQAMSNLPDAFSPQLLFLDADRNTLIRRYSDTRRLHPLSSKNLSLESAIDKESDLLEPLRSRADLIVDTSEMSVHELAEMLRTRLLGKRERELTMVFESFGFKHGIPIDADYVFDVRFLPNPHWDPKLRPMTGLDKPVAAFLDRHTEVHNFIYQTRSYLELWLPMLETNNRSYLTVAIGCTGGKHRSVYIAEQLADYFRSRGKNVQSRHRTLEKRKP</sequence>
<protein>
    <recommendedName>
        <fullName evidence="1">RNase adapter protein RapZ</fullName>
    </recommendedName>
</protein>
<keyword id="KW-0067">ATP-binding</keyword>
<keyword id="KW-0342">GTP-binding</keyword>
<keyword id="KW-0547">Nucleotide-binding</keyword>
<keyword id="KW-1185">Reference proteome</keyword>
<keyword id="KW-0694">RNA-binding</keyword>
<gene>
    <name evidence="1" type="primary">rapZ</name>
    <name type="ordered locus">EC55989_3623</name>
</gene>
<dbReference type="EMBL" id="CU928145">
    <property type="protein sequence ID" value="CAU99858.1"/>
    <property type="molecule type" value="Genomic_DNA"/>
</dbReference>
<dbReference type="RefSeq" id="WP_000243741.1">
    <property type="nucleotide sequence ID" value="NZ_CP028304.1"/>
</dbReference>
<dbReference type="SMR" id="B7LHQ9"/>
<dbReference type="GeneID" id="93778776"/>
<dbReference type="KEGG" id="eck:EC55989_3623"/>
<dbReference type="HOGENOM" id="CLU_059558_1_1_6"/>
<dbReference type="Proteomes" id="UP000000746">
    <property type="component" value="Chromosome"/>
</dbReference>
<dbReference type="GO" id="GO:0005524">
    <property type="term" value="F:ATP binding"/>
    <property type="evidence" value="ECO:0007669"/>
    <property type="project" value="UniProtKB-UniRule"/>
</dbReference>
<dbReference type="GO" id="GO:0005525">
    <property type="term" value="F:GTP binding"/>
    <property type="evidence" value="ECO:0007669"/>
    <property type="project" value="UniProtKB-UniRule"/>
</dbReference>
<dbReference type="GO" id="GO:0003723">
    <property type="term" value="F:RNA binding"/>
    <property type="evidence" value="ECO:0007669"/>
    <property type="project" value="UniProtKB-KW"/>
</dbReference>
<dbReference type="Gene3D" id="3.40.50.300">
    <property type="entry name" value="P-loop containing nucleotide triphosphate hydrolases"/>
    <property type="match status" value="1"/>
</dbReference>
<dbReference type="HAMAP" id="MF_00636">
    <property type="entry name" value="RapZ_like"/>
    <property type="match status" value="1"/>
</dbReference>
<dbReference type="InterPro" id="IPR027417">
    <property type="entry name" value="P-loop_NTPase"/>
</dbReference>
<dbReference type="InterPro" id="IPR005337">
    <property type="entry name" value="RapZ-like"/>
</dbReference>
<dbReference type="InterPro" id="IPR053930">
    <property type="entry name" value="RapZ-like_N"/>
</dbReference>
<dbReference type="InterPro" id="IPR053931">
    <property type="entry name" value="RapZ_C"/>
</dbReference>
<dbReference type="NCBIfam" id="NF003828">
    <property type="entry name" value="PRK05416.1"/>
    <property type="match status" value="1"/>
</dbReference>
<dbReference type="PANTHER" id="PTHR30448">
    <property type="entry name" value="RNASE ADAPTER PROTEIN RAPZ"/>
    <property type="match status" value="1"/>
</dbReference>
<dbReference type="PANTHER" id="PTHR30448:SF0">
    <property type="entry name" value="RNASE ADAPTER PROTEIN RAPZ"/>
    <property type="match status" value="1"/>
</dbReference>
<dbReference type="Pfam" id="PF22740">
    <property type="entry name" value="PapZ_C"/>
    <property type="match status" value="1"/>
</dbReference>
<dbReference type="Pfam" id="PF03668">
    <property type="entry name" value="RapZ-like_N"/>
    <property type="match status" value="1"/>
</dbReference>
<dbReference type="PIRSF" id="PIRSF005052">
    <property type="entry name" value="P-loopkin"/>
    <property type="match status" value="1"/>
</dbReference>
<dbReference type="SUPFAM" id="SSF52540">
    <property type="entry name" value="P-loop containing nucleoside triphosphate hydrolases"/>
    <property type="match status" value="1"/>
</dbReference>
<proteinExistence type="inferred from homology"/>
<feature type="chain" id="PRO_1000147359" description="RNase adapter protein RapZ">
    <location>
        <begin position="1"/>
        <end position="284"/>
    </location>
</feature>
<feature type="region of interest" description="RNA-binding" evidence="1">
    <location>
        <begin position="266"/>
        <end position="284"/>
    </location>
</feature>
<feature type="binding site" evidence="1">
    <location>
        <begin position="8"/>
        <end position="15"/>
    </location>
    <ligand>
        <name>ATP</name>
        <dbReference type="ChEBI" id="CHEBI:30616"/>
    </ligand>
</feature>
<feature type="binding site" evidence="1">
    <location>
        <begin position="56"/>
        <end position="59"/>
    </location>
    <ligand>
        <name>GTP</name>
        <dbReference type="ChEBI" id="CHEBI:37565"/>
    </ligand>
</feature>
<accession>B7LHQ9</accession>